<gene>
    <name evidence="1" type="primary">M</name>
</gene>
<name>VME1_CVRSD</name>
<comment type="function">
    <text evidence="1 2">Component of the viral envelope that plays a central role in virus morphogenesis and assembly via its interactions with other viral proteins.</text>
</comment>
<comment type="subunit">
    <text evidence="1 2">Homomultimer. Interacts with envelope E protein in the budding compartment of the host cell, which is located between endoplasmic reticulum and the Golgi complex. Forms a complex with HE and S proteins. Interacts with nucleocapsid N protein. This interaction probably participates in RNA packaging into the virus.</text>
</comment>
<comment type="subcellular location">
    <subcellularLocation>
        <location evidence="1">Virion membrane</location>
        <topology evidence="1">Multi-pass membrane protein</topology>
    </subcellularLocation>
    <subcellularLocation>
        <location evidence="1">Host Golgi apparatus membrane</location>
        <topology evidence="1">Multi-pass membrane protein</topology>
    </subcellularLocation>
    <text evidence="1">Largely embedded in the lipid bilayer.</text>
</comment>
<comment type="similarity">
    <text evidence="1">Belongs to the betacoronaviruses M protein family.</text>
</comment>
<proteinExistence type="inferred from homology"/>
<dbReference type="EMBL" id="AF207551">
    <property type="protein sequence ID" value="AAF97742.1"/>
    <property type="molecule type" value="Genomic_RNA"/>
</dbReference>
<dbReference type="SMR" id="Q9IKC7"/>
<dbReference type="GO" id="GO:0044178">
    <property type="term" value="C:host cell Golgi membrane"/>
    <property type="evidence" value="ECO:0007669"/>
    <property type="project" value="UniProtKB-SubCell"/>
</dbReference>
<dbReference type="GO" id="GO:0016020">
    <property type="term" value="C:membrane"/>
    <property type="evidence" value="ECO:0007669"/>
    <property type="project" value="UniProtKB-UniRule"/>
</dbReference>
<dbReference type="GO" id="GO:0019031">
    <property type="term" value="C:viral envelope"/>
    <property type="evidence" value="ECO:0007669"/>
    <property type="project" value="UniProtKB-UniRule"/>
</dbReference>
<dbReference type="GO" id="GO:0055036">
    <property type="term" value="C:virion membrane"/>
    <property type="evidence" value="ECO:0007669"/>
    <property type="project" value="UniProtKB-SubCell"/>
</dbReference>
<dbReference type="GO" id="GO:0039660">
    <property type="term" value="F:structural constituent of virion"/>
    <property type="evidence" value="ECO:0007669"/>
    <property type="project" value="UniProtKB-UniRule"/>
</dbReference>
<dbReference type="CDD" id="cd21568">
    <property type="entry name" value="HCoV-like_M"/>
    <property type="match status" value="1"/>
</dbReference>
<dbReference type="HAMAP" id="MF_04202">
    <property type="entry name" value="BETA_CORONA_M"/>
    <property type="match status" value="1"/>
</dbReference>
<dbReference type="InterPro" id="IPR002574">
    <property type="entry name" value="M_CoV"/>
</dbReference>
<dbReference type="InterPro" id="IPR044362">
    <property type="entry name" value="M_HCoV-like"/>
</dbReference>
<dbReference type="Pfam" id="PF01635">
    <property type="entry name" value="CoV_M"/>
    <property type="match status" value="1"/>
</dbReference>
<dbReference type="PROSITE" id="PS51927">
    <property type="entry name" value="COV_M"/>
    <property type="match status" value="1"/>
</dbReference>
<feature type="chain" id="PRO_0000106044" description="Membrane protein">
    <location>
        <begin position="1"/>
        <end position="228"/>
    </location>
</feature>
<feature type="topological domain" description="Virion surface" evidence="1">
    <location>
        <begin position="2"/>
        <end position="25"/>
    </location>
</feature>
<feature type="transmembrane region" description="Helical" evidence="1">
    <location>
        <begin position="26"/>
        <end position="46"/>
    </location>
</feature>
<feature type="topological domain" description="Intravirion" evidence="1">
    <location>
        <begin position="47"/>
        <end position="56"/>
    </location>
</feature>
<feature type="transmembrane region" description="Helical" evidence="1">
    <location>
        <begin position="57"/>
        <end position="77"/>
    </location>
</feature>
<feature type="topological domain" description="Virion surface" evidence="1">
    <location>
        <begin position="78"/>
        <end position="85"/>
    </location>
</feature>
<feature type="transmembrane region" description="Helical" evidence="1">
    <location>
        <begin position="86"/>
        <end position="106"/>
    </location>
</feature>
<feature type="topological domain" description="Intravirion" evidence="1">
    <location>
        <begin position="107"/>
        <end position="228"/>
    </location>
</feature>
<organism>
    <name type="scientific">Rat coronavirus (strain 681)</name>
    <name type="common">RCV-SDAV</name>
    <name type="synonym">Sialodacryoadenitis virus SDAV-681</name>
    <dbReference type="NCBI Taxonomy" id="33740"/>
    <lineage>
        <taxon>Viruses</taxon>
        <taxon>Riboviria</taxon>
        <taxon>Orthornavirae</taxon>
        <taxon>Pisuviricota</taxon>
        <taxon>Pisoniviricetes</taxon>
        <taxon>Nidovirales</taxon>
        <taxon>Cornidovirineae</taxon>
        <taxon>Coronaviridae</taxon>
        <taxon>Orthocoronavirinae</taxon>
        <taxon>Betacoronavirus</taxon>
        <taxon>Embecovirus</taxon>
        <taxon>Murine coronavirus</taxon>
    </lineage>
</organism>
<accession>Q9IKC7</accession>
<protein>
    <recommendedName>
        <fullName evidence="1">Membrane protein</fullName>
        <shortName evidence="1">M protein</shortName>
    </recommendedName>
    <alternativeName>
        <fullName evidence="1">E1 glycoprotein</fullName>
    </alternativeName>
    <alternativeName>
        <fullName evidence="1">Matrix glycoprotein</fullName>
    </alternativeName>
    <alternativeName>
        <fullName evidence="1">Membrane glycoprotein</fullName>
    </alternativeName>
</protein>
<keyword id="KW-0325">Glycoprotein</keyword>
<keyword id="KW-1040">Host Golgi apparatus</keyword>
<keyword id="KW-1043">Host membrane</keyword>
<keyword id="KW-0945">Host-virus interaction</keyword>
<keyword id="KW-0472">Membrane</keyword>
<keyword id="KW-0812">Transmembrane</keyword>
<keyword id="KW-1133">Transmembrane helix</keyword>
<keyword id="KW-0261">Viral envelope protein</keyword>
<keyword id="KW-0899">Viral immunoevasion</keyword>
<keyword id="KW-0468">Viral matrix protein</keyword>
<keyword id="KW-0946">Virion</keyword>
<organismHost>
    <name type="scientific">Rattus norvegicus</name>
    <name type="common">Rat</name>
    <dbReference type="NCBI Taxonomy" id="10116"/>
</organismHost>
<reference key="1">
    <citation type="journal article" date="2000" name="Clin. Diagn. Lab. Immunol.">
        <title>Primary structure of the sialodacryoadenitis virus genome: sequence of the structural-protein region and its application for differential diagnosis.</title>
        <authorList>
            <person name="Yoo D."/>
            <person name="Pei Y."/>
            <person name="Christie N."/>
            <person name="Cooper M."/>
        </authorList>
    </citation>
    <scope>NUCLEOTIDE SEQUENCE [GENOMIC RNA]</scope>
</reference>
<evidence type="ECO:0000255" key="1">
    <source>
        <dbReference type="HAMAP-Rule" id="MF_04202"/>
    </source>
</evidence>
<evidence type="ECO:0000255" key="2">
    <source>
        <dbReference type="PROSITE-ProRule" id="PRU01275"/>
    </source>
</evidence>
<sequence length="228" mass="25996">MSSTTPAPQTVYQWTADVAVRFLKEWNFLLGIILLFITIILQFGYTSRSMFIYVVKMIILWLMWPLTIVLCIFNCVYALNNVYLGFSIVFTIVSIVMWIMYFVNSIRLFIRTGSWWSFNPETNNLMCIDVKGTVYVRPIIEDYHTLTATNVRGHLYMQGVKLGTGFSLSDLPAYVTVAKVSHLCTYKRAFLDKVDGVSGFAVYVKSKVGNYRLPSNKPSGADTALLRI</sequence>